<organism>
    <name type="scientific">Helicobacter pylori (strain G27)</name>
    <dbReference type="NCBI Taxonomy" id="563041"/>
    <lineage>
        <taxon>Bacteria</taxon>
        <taxon>Pseudomonadati</taxon>
        <taxon>Campylobacterota</taxon>
        <taxon>Epsilonproteobacteria</taxon>
        <taxon>Campylobacterales</taxon>
        <taxon>Helicobacteraceae</taxon>
        <taxon>Helicobacter</taxon>
    </lineage>
</organism>
<name>ENGB_HELPG</name>
<gene>
    <name evidence="1" type="primary">engB</name>
    <name type="ordered locus">HPG27_1504</name>
</gene>
<comment type="function">
    <text evidence="1">Necessary for normal cell division and for the maintenance of normal septation.</text>
</comment>
<comment type="cofactor">
    <cofactor evidence="1">
        <name>Mg(2+)</name>
        <dbReference type="ChEBI" id="CHEBI:18420"/>
    </cofactor>
</comment>
<comment type="similarity">
    <text evidence="1">Belongs to the TRAFAC class TrmE-Era-EngA-EngB-Septin-like GTPase superfamily. EngB GTPase family.</text>
</comment>
<protein>
    <recommendedName>
        <fullName evidence="1">Probable GTP-binding protein EngB</fullName>
    </recommendedName>
</protein>
<keyword id="KW-0131">Cell cycle</keyword>
<keyword id="KW-0132">Cell division</keyword>
<keyword id="KW-0342">GTP-binding</keyword>
<keyword id="KW-0460">Magnesium</keyword>
<keyword id="KW-0479">Metal-binding</keyword>
<keyword id="KW-0547">Nucleotide-binding</keyword>
<keyword id="KW-1185">Reference proteome</keyword>
<keyword id="KW-0717">Septation</keyword>
<accession>B5Z9J7</accession>
<reference key="1">
    <citation type="journal article" date="2009" name="J. Bacteriol.">
        <title>The complete genome sequence of Helicobacter pylori strain G27.</title>
        <authorList>
            <person name="Baltrus D.A."/>
            <person name="Amieva M.R."/>
            <person name="Covacci A."/>
            <person name="Lowe T.M."/>
            <person name="Merrell D.S."/>
            <person name="Ottemann K.M."/>
            <person name="Stein M."/>
            <person name="Salama N.R."/>
            <person name="Guillemin K."/>
        </authorList>
    </citation>
    <scope>NUCLEOTIDE SEQUENCE [LARGE SCALE GENOMIC DNA]</scope>
    <source>
        <strain>G27</strain>
    </source>
</reference>
<proteinExistence type="inferred from homology"/>
<feature type="chain" id="PRO_1000115979" description="Probable GTP-binding protein EngB">
    <location>
        <begin position="1"/>
        <end position="208"/>
    </location>
</feature>
<feature type="domain" description="EngB-type G" evidence="1">
    <location>
        <begin position="23"/>
        <end position="205"/>
    </location>
</feature>
<feature type="binding site" evidence="1">
    <location>
        <begin position="31"/>
        <end position="38"/>
    </location>
    <ligand>
        <name>GTP</name>
        <dbReference type="ChEBI" id="CHEBI:37565"/>
    </ligand>
</feature>
<feature type="binding site" evidence="1">
    <location>
        <position position="38"/>
    </location>
    <ligand>
        <name>Mg(2+)</name>
        <dbReference type="ChEBI" id="CHEBI:18420"/>
    </ligand>
</feature>
<feature type="binding site" evidence="1">
    <location>
        <begin position="57"/>
        <end position="61"/>
    </location>
    <ligand>
        <name>GTP</name>
        <dbReference type="ChEBI" id="CHEBI:37565"/>
    </ligand>
</feature>
<feature type="binding site" evidence="1">
    <location>
        <position position="59"/>
    </location>
    <ligand>
        <name>Mg(2+)</name>
        <dbReference type="ChEBI" id="CHEBI:18420"/>
    </ligand>
</feature>
<feature type="binding site" evidence="1">
    <location>
        <begin position="84"/>
        <end position="87"/>
    </location>
    <ligand>
        <name>GTP</name>
        <dbReference type="ChEBI" id="CHEBI:37565"/>
    </ligand>
</feature>
<feature type="binding site" evidence="1">
    <location>
        <begin position="154"/>
        <end position="157"/>
    </location>
    <ligand>
        <name>GTP</name>
        <dbReference type="ChEBI" id="CHEBI:37565"/>
    </ligand>
</feature>
<feature type="binding site" evidence="1">
    <location>
        <begin position="182"/>
        <end position="184"/>
    </location>
    <ligand>
        <name>GTP</name>
        <dbReference type="ChEBI" id="CHEBI:37565"/>
    </ligand>
</feature>
<dbReference type="EMBL" id="CP001173">
    <property type="protein sequence ID" value="ACI28246.1"/>
    <property type="molecule type" value="Genomic_DNA"/>
</dbReference>
<dbReference type="RefSeq" id="WP_000635391.1">
    <property type="nucleotide sequence ID" value="NC_011333.1"/>
</dbReference>
<dbReference type="SMR" id="B5Z9J7"/>
<dbReference type="KEGG" id="hpg:HPG27_1504"/>
<dbReference type="HOGENOM" id="CLU_033732_3_2_7"/>
<dbReference type="Proteomes" id="UP000001735">
    <property type="component" value="Chromosome"/>
</dbReference>
<dbReference type="GO" id="GO:0005829">
    <property type="term" value="C:cytosol"/>
    <property type="evidence" value="ECO:0007669"/>
    <property type="project" value="TreeGrafter"/>
</dbReference>
<dbReference type="GO" id="GO:0005525">
    <property type="term" value="F:GTP binding"/>
    <property type="evidence" value="ECO:0007669"/>
    <property type="project" value="UniProtKB-UniRule"/>
</dbReference>
<dbReference type="GO" id="GO:0046872">
    <property type="term" value="F:metal ion binding"/>
    <property type="evidence" value="ECO:0007669"/>
    <property type="project" value="UniProtKB-KW"/>
</dbReference>
<dbReference type="GO" id="GO:0000917">
    <property type="term" value="P:division septum assembly"/>
    <property type="evidence" value="ECO:0007669"/>
    <property type="project" value="UniProtKB-KW"/>
</dbReference>
<dbReference type="CDD" id="cd01876">
    <property type="entry name" value="YihA_EngB"/>
    <property type="match status" value="1"/>
</dbReference>
<dbReference type="FunFam" id="3.40.50.300:FF:002409">
    <property type="entry name" value="Probable GTP-binding protein EngB"/>
    <property type="match status" value="1"/>
</dbReference>
<dbReference type="Gene3D" id="3.40.50.300">
    <property type="entry name" value="P-loop containing nucleotide triphosphate hydrolases"/>
    <property type="match status" value="1"/>
</dbReference>
<dbReference type="HAMAP" id="MF_00321">
    <property type="entry name" value="GTPase_EngB"/>
    <property type="match status" value="1"/>
</dbReference>
<dbReference type="InterPro" id="IPR030393">
    <property type="entry name" value="G_ENGB_dom"/>
</dbReference>
<dbReference type="InterPro" id="IPR006073">
    <property type="entry name" value="GTP-bd"/>
</dbReference>
<dbReference type="InterPro" id="IPR019987">
    <property type="entry name" value="GTP-bd_ribosome_bio_YsxC"/>
</dbReference>
<dbReference type="InterPro" id="IPR027417">
    <property type="entry name" value="P-loop_NTPase"/>
</dbReference>
<dbReference type="NCBIfam" id="TIGR03598">
    <property type="entry name" value="GTPase_YsxC"/>
    <property type="match status" value="1"/>
</dbReference>
<dbReference type="PANTHER" id="PTHR11649:SF13">
    <property type="entry name" value="ENGB-TYPE G DOMAIN-CONTAINING PROTEIN"/>
    <property type="match status" value="1"/>
</dbReference>
<dbReference type="PANTHER" id="PTHR11649">
    <property type="entry name" value="MSS1/TRME-RELATED GTP-BINDING PROTEIN"/>
    <property type="match status" value="1"/>
</dbReference>
<dbReference type="Pfam" id="PF01926">
    <property type="entry name" value="MMR_HSR1"/>
    <property type="match status" value="1"/>
</dbReference>
<dbReference type="SUPFAM" id="SSF52540">
    <property type="entry name" value="P-loop containing nucleoside triphosphate hydrolases"/>
    <property type="match status" value="1"/>
</dbReference>
<dbReference type="PROSITE" id="PS51706">
    <property type="entry name" value="G_ENGB"/>
    <property type="match status" value="1"/>
</dbReference>
<sequence length="208" mass="23618">MIVIKDAHFLTSSSQLFQCPASLTSEMVILGRSNVGKSSFINTLLGKNLAKSSATPGKTRLANFFSTTWEDKENALTTTFNVIDLPGFGYAKVSKSLKKEWEGFLWELLSVRISIKLFIHLVDARHLDLEIDKNAKENIQALLRPDQAYLSLFTKFDKLNKNEQHRLFLNAPKPFLINTTHFNALSSKYPTLEIVRQTLLKYLLTNPL</sequence>
<evidence type="ECO:0000255" key="1">
    <source>
        <dbReference type="HAMAP-Rule" id="MF_00321"/>
    </source>
</evidence>